<keyword id="KW-1185">Reference proteome</keyword>
<keyword id="KW-0687">Ribonucleoprotein</keyword>
<keyword id="KW-0689">Ribosomal protein</keyword>
<protein>
    <recommendedName>
        <fullName evidence="1">Small ribosomal subunit protein bS16</fullName>
    </recommendedName>
    <alternativeName>
        <fullName evidence="2">30S ribosomal protein S16</fullName>
    </alternativeName>
</protein>
<sequence>MAVKIRLARSGAKKCAYFKIVIANNCSPRDGAFIEKVGHYNPMLPKDNHERVILKTDRIEHWLSHGAQPTEKVINFLQQFSITLPLAIQKKHNIKLKNYVAKPSKKSK</sequence>
<reference key="1">
    <citation type="journal article" date="2007" name="Proc. Natl. Acad. Sci. U.S.A.">
        <title>The Orientia tsutsugamushi genome reveals massive proliferation of conjugative type IV secretion system and host-cell interaction genes.</title>
        <authorList>
            <person name="Cho N.-H."/>
            <person name="Kim H.-R."/>
            <person name="Lee J.-H."/>
            <person name="Kim S.-Y."/>
            <person name="Kim J."/>
            <person name="Cha S."/>
            <person name="Kim S.-Y."/>
            <person name="Darby A.C."/>
            <person name="Fuxelius H.-H."/>
            <person name="Yin J."/>
            <person name="Kim J.H."/>
            <person name="Kim J."/>
            <person name="Lee S.J."/>
            <person name="Koh Y.-S."/>
            <person name="Jang W.-J."/>
            <person name="Park K.-H."/>
            <person name="Andersson S.G.E."/>
            <person name="Choi M.-S."/>
            <person name="Kim I.-S."/>
        </authorList>
    </citation>
    <scope>NUCLEOTIDE SEQUENCE [LARGE SCALE GENOMIC DNA]</scope>
    <source>
        <strain>Boryong</strain>
    </source>
</reference>
<proteinExistence type="inferred from homology"/>
<evidence type="ECO:0000255" key="1">
    <source>
        <dbReference type="HAMAP-Rule" id="MF_00385"/>
    </source>
</evidence>
<evidence type="ECO:0000305" key="2"/>
<name>RS16_ORITB</name>
<accession>A5CCZ6</accession>
<dbReference type="EMBL" id="AM494475">
    <property type="protein sequence ID" value="CAM79630.1"/>
    <property type="molecule type" value="Genomic_DNA"/>
</dbReference>
<dbReference type="RefSeq" id="WP_011944546.1">
    <property type="nucleotide sequence ID" value="NC_009488.1"/>
</dbReference>
<dbReference type="SMR" id="A5CCZ6"/>
<dbReference type="KEGG" id="ots:OTBS_0564"/>
<dbReference type="eggNOG" id="COG0228">
    <property type="taxonomic scope" value="Bacteria"/>
</dbReference>
<dbReference type="HOGENOM" id="CLU_100590_3_1_5"/>
<dbReference type="Proteomes" id="UP000001565">
    <property type="component" value="Chromosome"/>
</dbReference>
<dbReference type="GO" id="GO:0005737">
    <property type="term" value="C:cytoplasm"/>
    <property type="evidence" value="ECO:0007669"/>
    <property type="project" value="UniProtKB-ARBA"/>
</dbReference>
<dbReference type="GO" id="GO:0015935">
    <property type="term" value="C:small ribosomal subunit"/>
    <property type="evidence" value="ECO:0007669"/>
    <property type="project" value="TreeGrafter"/>
</dbReference>
<dbReference type="GO" id="GO:0003735">
    <property type="term" value="F:structural constituent of ribosome"/>
    <property type="evidence" value="ECO:0007669"/>
    <property type="project" value="InterPro"/>
</dbReference>
<dbReference type="GO" id="GO:0006412">
    <property type="term" value="P:translation"/>
    <property type="evidence" value="ECO:0007669"/>
    <property type="project" value="UniProtKB-UniRule"/>
</dbReference>
<dbReference type="Gene3D" id="3.30.1320.10">
    <property type="match status" value="1"/>
</dbReference>
<dbReference type="HAMAP" id="MF_00385">
    <property type="entry name" value="Ribosomal_bS16"/>
    <property type="match status" value="1"/>
</dbReference>
<dbReference type="InterPro" id="IPR000307">
    <property type="entry name" value="Ribosomal_bS16"/>
</dbReference>
<dbReference type="InterPro" id="IPR020592">
    <property type="entry name" value="Ribosomal_bS16_CS"/>
</dbReference>
<dbReference type="InterPro" id="IPR023803">
    <property type="entry name" value="Ribosomal_bS16_dom_sf"/>
</dbReference>
<dbReference type="NCBIfam" id="TIGR00002">
    <property type="entry name" value="S16"/>
    <property type="match status" value="1"/>
</dbReference>
<dbReference type="PANTHER" id="PTHR12919">
    <property type="entry name" value="30S RIBOSOMAL PROTEIN S16"/>
    <property type="match status" value="1"/>
</dbReference>
<dbReference type="PANTHER" id="PTHR12919:SF20">
    <property type="entry name" value="SMALL RIBOSOMAL SUBUNIT PROTEIN BS16M"/>
    <property type="match status" value="1"/>
</dbReference>
<dbReference type="Pfam" id="PF00886">
    <property type="entry name" value="Ribosomal_S16"/>
    <property type="match status" value="1"/>
</dbReference>
<dbReference type="SUPFAM" id="SSF54565">
    <property type="entry name" value="Ribosomal protein S16"/>
    <property type="match status" value="1"/>
</dbReference>
<dbReference type="PROSITE" id="PS00732">
    <property type="entry name" value="RIBOSOMAL_S16"/>
    <property type="match status" value="1"/>
</dbReference>
<comment type="similarity">
    <text evidence="1">Belongs to the bacterial ribosomal protein bS16 family.</text>
</comment>
<organism>
    <name type="scientific">Orientia tsutsugamushi (strain Boryong)</name>
    <name type="common">Rickettsia tsutsugamushi</name>
    <dbReference type="NCBI Taxonomy" id="357244"/>
    <lineage>
        <taxon>Bacteria</taxon>
        <taxon>Pseudomonadati</taxon>
        <taxon>Pseudomonadota</taxon>
        <taxon>Alphaproteobacteria</taxon>
        <taxon>Rickettsiales</taxon>
        <taxon>Rickettsiaceae</taxon>
        <taxon>Rickettsieae</taxon>
        <taxon>Orientia</taxon>
    </lineage>
</organism>
<gene>
    <name evidence="1" type="primary">rpsP</name>
    <name type="ordered locus">OTBS_0564</name>
</gene>
<feature type="chain" id="PRO_1000049306" description="Small ribosomal subunit protein bS16">
    <location>
        <begin position="1"/>
        <end position="108"/>
    </location>
</feature>